<protein>
    <recommendedName>
        <fullName evidence="1">Pyrophosphate--fructose 6-phosphate 1-phosphotransferase</fullName>
        <ecNumber evidence="1 2">2.7.1.90</ecNumber>
    </recommendedName>
    <alternativeName>
        <fullName evidence="1">6-phosphofructokinase, pyrophosphate dependent</fullName>
    </alternativeName>
    <alternativeName>
        <fullName evidence="1">PPi-dependent phosphofructokinase</fullName>
        <shortName evidence="1">PPi-PFK</shortName>
    </alternativeName>
    <alternativeName>
        <fullName evidence="1">Pyrophosphate-dependent 6-phosphofructose-1-kinase</fullName>
    </alternativeName>
</protein>
<comment type="function">
    <text evidence="1 2">Catalyzes the phosphorylation of D-fructose 6-phosphate, the first committing step of glycolysis. Uses inorganic phosphate (PPi) as phosphoryl donor instead of ATP like common ATP-dependent phosphofructokinases (ATP-PFKs), which renders the reaction reversible, and can thus function both in glycolysis and gluconeogenesis. Consistently, PPi-PFK can replace the enzymes of both the forward (ATP-PFK) and reverse (fructose-bisphosphatase (FBPase)) reactions.</text>
</comment>
<comment type="catalytic activity">
    <reaction evidence="1 2">
        <text>beta-D-fructose 6-phosphate + diphosphate = beta-D-fructose 1,6-bisphosphate + phosphate + H(+)</text>
        <dbReference type="Rhea" id="RHEA:13613"/>
        <dbReference type="ChEBI" id="CHEBI:15378"/>
        <dbReference type="ChEBI" id="CHEBI:32966"/>
        <dbReference type="ChEBI" id="CHEBI:33019"/>
        <dbReference type="ChEBI" id="CHEBI:43474"/>
        <dbReference type="ChEBI" id="CHEBI:57634"/>
        <dbReference type="EC" id="2.7.1.90"/>
    </reaction>
</comment>
<comment type="cofactor">
    <cofactor evidence="1">
        <name>Mg(2+)</name>
        <dbReference type="ChEBI" id="CHEBI:18420"/>
    </cofactor>
</comment>
<comment type="activity regulation">
    <text evidence="1">Non-allosteric.</text>
</comment>
<comment type="pathway">
    <text evidence="1">Carbohydrate degradation; glycolysis; D-glyceraldehyde 3-phosphate and glycerone phosphate from D-glucose: step 3/4.</text>
</comment>
<comment type="subunit">
    <text evidence="1">Homodimer.</text>
</comment>
<comment type="subcellular location">
    <subcellularLocation>
        <location evidence="1">Cytoplasm</location>
    </subcellularLocation>
</comment>
<comment type="similarity">
    <text evidence="1">Belongs to the phosphofructokinase type A (PFKA) family. PPi-dependent PFK group II subfamily. Clade 'B2' sub-subfamily.</text>
</comment>
<accession>E1VB09</accession>
<evidence type="ECO:0000255" key="1">
    <source>
        <dbReference type="HAMAP-Rule" id="MF_01978"/>
    </source>
</evidence>
<evidence type="ECO:0000269" key="2">
    <source>
    </source>
</evidence>
<evidence type="ECO:0000303" key="3">
    <source>
    </source>
</evidence>
<evidence type="ECO:0000312" key="4">
    <source>
        <dbReference type="EMBL" id="CBV42070.1"/>
    </source>
</evidence>
<proteinExistence type="evidence at protein level"/>
<sequence>MAQHNAFYAQSGGVTAVINASACGVIEACRRHDDRIGKVYAGHNGIIGALTEDLIDVSQESDEAIAALRHTPAGAFGSCRYKLKDIETHRTQYERLIEVFRAHDIRYFFYNGGGDSADTCLKVSQLSEKMGYPLTAIHVPKTVDNDLPITDNSPGFGSVAKYIATSTLEASLDIASMCATSTKVFVLEVMGRHAGWIAAAGALAGQGEGDPPHLVIFPEIDFDRAAVMARVEESVKKCGYCVIVVSEGARYEDGTFLADSGNTDAFGHRQLGGVAPTLAGMIKQDLGYKYHWAVADYLQRAARHLASKTDVDQAYAVGEKAVELALDGQNAKMPAIKRISDEPYAWTVEAAPLADVANREKFMPRDFIREDGFGITEQCRRYLAPLIQGEDFPPFENGLPKVAKLAKHRVERKLPEFKL</sequence>
<organism>
    <name type="scientific">Halomonas elongata (strain ATCC 33173 / DSM 2581 / NBRC 15536 / NCIMB 2198 / 1H9)</name>
    <dbReference type="NCBI Taxonomy" id="768066"/>
    <lineage>
        <taxon>Bacteria</taxon>
        <taxon>Pseudomonadati</taxon>
        <taxon>Pseudomonadota</taxon>
        <taxon>Gammaproteobacteria</taxon>
        <taxon>Oceanospirillales</taxon>
        <taxon>Halomonadaceae</taxon>
        <taxon>Halomonas</taxon>
    </lineage>
</organism>
<dbReference type="EC" id="2.7.1.90" evidence="1 2"/>
<dbReference type="EMBL" id="FN869568">
    <property type="protein sequence ID" value="CBV42070.1"/>
    <property type="molecule type" value="Genomic_DNA"/>
</dbReference>
<dbReference type="RefSeq" id="WP_013331942.1">
    <property type="nucleotide sequence ID" value="NC_014532.2"/>
</dbReference>
<dbReference type="SMR" id="E1VB09"/>
<dbReference type="STRING" id="768066.HELO_2186"/>
<dbReference type="GeneID" id="91009478"/>
<dbReference type="KEGG" id="hel:HELO_2186"/>
<dbReference type="eggNOG" id="COG0205">
    <property type="taxonomic scope" value="Bacteria"/>
</dbReference>
<dbReference type="HOGENOM" id="CLU_020655_1_1_6"/>
<dbReference type="OrthoDB" id="9802503at2"/>
<dbReference type="UniPathway" id="UPA00109">
    <property type="reaction ID" value="UER00182"/>
</dbReference>
<dbReference type="Proteomes" id="UP000008707">
    <property type="component" value="Chromosome"/>
</dbReference>
<dbReference type="GO" id="GO:0005737">
    <property type="term" value="C:cytoplasm"/>
    <property type="evidence" value="ECO:0007669"/>
    <property type="project" value="UniProtKB-SubCell"/>
</dbReference>
<dbReference type="GO" id="GO:0003872">
    <property type="term" value="F:6-phosphofructokinase activity"/>
    <property type="evidence" value="ECO:0007669"/>
    <property type="project" value="UniProtKB-UniRule"/>
</dbReference>
<dbReference type="GO" id="GO:0047334">
    <property type="term" value="F:diphosphate-fructose-6-phosphate 1-phosphotransferase activity"/>
    <property type="evidence" value="ECO:0007669"/>
    <property type="project" value="UniProtKB-EC"/>
</dbReference>
<dbReference type="GO" id="GO:0046872">
    <property type="term" value="F:metal ion binding"/>
    <property type="evidence" value="ECO:0007669"/>
    <property type="project" value="UniProtKB-KW"/>
</dbReference>
<dbReference type="GO" id="GO:0006002">
    <property type="term" value="P:fructose 6-phosphate metabolic process"/>
    <property type="evidence" value="ECO:0007669"/>
    <property type="project" value="InterPro"/>
</dbReference>
<dbReference type="Gene3D" id="3.40.50.450">
    <property type="match status" value="1"/>
</dbReference>
<dbReference type="Gene3D" id="3.40.50.460">
    <property type="entry name" value="Phosphofructokinase domain"/>
    <property type="match status" value="1"/>
</dbReference>
<dbReference type="HAMAP" id="MF_01978">
    <property type="entry name" value="Phosphofructokinase_II_B2"/>
    <property type="match status" value="1"/>
</dbReference>
<dbReference type="InterPro" id="IPR022953">
    <property type="entry name" value="ATP_PFK"/>
</dbReference>
<dbReference type="InterPro" id="IPR050929">
    <property type="entry name" value="PFKA"/>
</dbReference>
<dbReference type="InterPro" id="IPR000023">
    <property type="entry name" value="Phosphofructokinase_dom"/>
</dbReference>
<dbReference type="InterPro" id="IPR035966">
    <property type="entry name" value="PKF_sf"/>
</dbReference>
<dbReference type="InterPro" id="IPR011404">
    <property type="entry name" value="PPi-PFK"/>
</dbReference>
<dbReference type="NCBIfam" id="NF010675">
    <property type="entry name" value="PRK14072.1"/>
    <property type="match status" value="1"/>
</dbReference>
<dbReference type="PANTHER" id="PTHR45770">
    <property type="entry name" value="ATP-DEPENDENT 6-PHOSPHOFRUCTOKINASE 1"/>
    <property type="match status" value="1"/>
</dbReference>
<dbReference type="Pfam" id="PF00365">
    <property type="entry name" value="PFK"/>
    <property type="match status" value="1"/>
</dbReference>
<dbReference type="PIRSF" id="PIRSF036483">
    <property type="entry name" value="PFK_XF0274"/>
    <property type="match status" value="1"/>
</dbReference>
<dbReference type="PRINTS" id="PR00476">
    <property type="entry name" value="PHFRCTKINASE"/>
</dbReference>
<dbReference type="SUPFAM" id="SSF53784">
    <property type="entry name" value="Phosphofructokinase"/>
    <property type="match status" value="1"/>
</dbReference>
<keyword id="KW-0963">Cytoplasm</keyword>
<keyword id="KW-0324">Glycolysis</keyword>
<keyword id="KW-0418">Kinase</keyword>
<keyword id="KW-0460">Magnesium</keyword>
<keyword id="KW-0479">Metal-binding</keyword>
<keyword id="KW-0808">Transferase</keyword>
<name>PFP_HALED</name>
<reference key="1">
    <citation type="journal article" date="2011" name="Environ. Microbiol.">
        <title>A blueprint of ectoine metabolism from the genome of the industrial producer Halomonas elongata DSM 2581(T).</title>
        <authorList>
            <person name="Schwibbert K."/>
            <person name="Marin-Sanguino A."/>
            <person name="Bagyan I."/>
            <person name="Heidrich G."/>
            <person name="Lentzen G."/>
            <person name="Seitz H."/>
            <person name="Rampp M."/>
            <person name="Schuster S.C."/>
            <person name="Klenk H.P."/>
            <person name="Pfeiffer F."/>
            <person name="Oesterhelt D."/>
            <person name="Kunte H.J."/>
        </authorList>
    </citation>
    <scope>NUCLEOTIDE SEQUENCE [LARGE SCALE GENOMIC DNA]</scope>
    <source>
        <strain>ATCC 33173 / DSM 2581 / NBRC 15536 / NCIMB 2198 / 1H9</strain>
    </source>
</reference>
<reference key="2">
    <citation type="journal article" date="2017" name="PLoS ONE">
        <title>Osmoregulation in the halophilic bacterium Halomonas elongata: a case study for integrative systems biology.</title>
        <authorList>
            <person name="Kindzierski V."/>
            <person name="Raschke S."/>
            <person name="Knabe N."/>
            <person name="Siedler F."/>
            <person name="Scheffer B."/>
            <person name="Pflueger-Grau K."/>
            <person name="Pfeiffer F."/>
            <person name="Oesterhelt D."/>
            <person name="Marin-Sanguino A."/>
            <person name="Kunte H.J."/>
        </authorList>
    </citation>
    <scope>FUNCTION</scope>
    <scope>CATALYTIC ACTIVITY</scope>
    <source>
        <strain>ATCC 33173 / DSM 2581 / NBRC 15536 / NCIMB 2198 / 1H9</strain>
    </source>
</reference>
<gene>
    <name evidence="1 3" type="primary">pfp</name>
    <name evidence="4" type="synonym">pfkA</name>
    <name evidence="4" type="ordered locus">HELO_2186</name>
</gene>
<feature type="chain" id="PRO_0000439536" description="Pyrophosphate--fructose 6-phosphate 1-phosphotransferase">
    <location>
        <begin position="1"/>
        <end position="419"/>
    </location>
</feature>
<feature type="active site" description="Proton acceptor" evidence="1">
    <location>
        <position position="144"/>
    </location>
</feature>
<feature type="binding site" evidence="1">
    <location>
        <position position="13"/>
    </location>
    <ligand>
        <name>diphosphate</name>
        <dbReference type="ChEBI" id="CHEBI:33019"/>
    </ligand>
</feature>
<feature type="binding site" evidence="1">
    <location>
        <begin position="142"/>
        <end position="144"/>
    </location>
    <ligand>
        <name>substrate</name>
    </ligand>
</feature>
<feature type="binding site" evidence="1">
    <location>
        <begin position="190"/>
        <end position="192"/>
    </location>
    <ligand>
        <name>substrate</name>
    </ligand>
</feature>
<feature type="binding site" evidence="1">
    <location>
        <position position="247"/>
    </location>
    <ligand>
        <name>substrate</name>
    </ligand>
</feature>
<feature type="binding site" evidence="1">
    <location>
        <begin position="297"/>
        <end position="300"/>
    </location>
    <ligand>
        <name>substrate</name>
    </ligand>
</feature>
<feature type="site" description="Important for catalytic activity and substrate specificity; stabilizes the transition state when the phosphoryl donor is PPi; prevents ATP from binding by mimicking the alpha-phosphate group of ATP" evidence="1">
    <location>
        <position position="115"/>
    </location>
</feature>
<feature type="site" description="Important for catalytic activity; stabilizes the transition state when the phosphoryl donor is PPi" evidence="1">
    <location>
        <position position="141"/>
    </location>
</feature>